<keyword id="KW-0028">Amino-acid biosynthesis</keyword>
<keyword id="KW-0963">Cytoplasm</keyword>
<keyword id="KW-0220">Diaminopimelate biosynthesis</keyword>
<keyword id="KW-0457">Lysine biosynthesis</keyword>
<keyword id="KW-0520">NAD</keyword>
<keyword id="KW-0521">NADP</keyword>
<keyword id="KW-0560">Oxidoreductase</keyword>
<keyword id="KW-1185">Reference proteome</keyword>
<reference key="1">
    <citation type="journal article" date="2002" name="Proc. Natl. Acad. Sci. U.S.A.">
        <title>Genome sequence of Streptococcus mutans UA159, a cariogenic dental pathogen.</title>
        <authorList>
            <person name="Ajdic D.J."/>
            <person name="McShan W.M."/>
            <person name="McLaughlin R.E."/>
            <person name="Savic G."/>
            <person name="Chang J."/>
            <person name="Carson M.B."/>
            <person name="Primeaux C."/>
            <person name="Tian R."/>
            <person name="Kenton S."/>
            <person name="Jia H.G."/>
            <person name="Lin S.P."/>
            <person name="Qian Y."/>
            <person name="Li S."/>
            <person name="Zhu H."/>
            <person name="Najar F.Z."/>
            <person name="Lai H."/>
            <person name="White J."/>
            <person name="Roe B.A."/>
            <person name="Ferretti J.J."/>
        </authorList>
    </citation>
    <scope>NUCLEOTIDE SEQUENCE [LARGE SCALE GENOMIC DNA]</scope>
    <source>
        <strain>ATCC 700610 / UA159</strain>
    </source>
</reference>
<name>DAPB_STRMU</name>
<dbReference type="EC" id="1.17.1.8" evidence="1"/>
<dbReference type="EMBL" id="AE014133">
    <property type="protein sequence ID" value="AAN58613.1"/>
    <property type="molecule type" value="Genomic_DNA"/>
</dbReference>
<dbReference type="RefSeq" id="NP_721307.1">
    <property type="nucleotide sequence ID" value="NC_004350.2"/>
</dbReference>
<dbReference type="RefSeq" id="WP_002262893.1">
    <property type="nucleotide sequence ID" value="NC_004350.2"/>
</dbReference>
<dbReference type="SMR" id="Q8DUL9"/>
<dbReference type="STRING" id="210007.SMU_900"/>
<dbReference type="GeneID" id="93859575"/>
<dbReference type="KEGG" id="smu:SMU_900"/>
<dbReference type="PATRIC" id="fig|210007.7.peg.806"/>
<dbReference type="eggNOG" id="COG0289">
    <property type="taxonomic scope" value="Bacteria"/>
</dbReference>
<dbReference type="HOGENOM" id="CLU_047479_0_1_9"/>
<dbReference type="OrthoDB" id="9790352at2"/>
<dbReference type="PhylomeDB" id="Q8DUL9"/>
<dbReference type="UniPathway" id="UPA00034">
    <property type="reaction ID" value="UER00018"/>
</dbReference>
<dbReference type="Proteomes" id="UP000002512">
    <property type="component" value="Chromosome"/>
</dbReference>
<dbReference type="GO" id="GO:0005829">
    <property type="term" value="C:cytosol"/>
    <property type="evidence" value="ECO:0007669"/>
    <property type="project" value="TreeGrafter"/>
</dbReference>
<dbReference type="GO" id="GO:0008839">
    <property type="term" value="F:4-hydroxy-tetrahydrodipicolinate reductase"/>
    <property type="evidence" value="ECO:0007669"/>
    <property type="project" value="UniProtKB-EC"/>
</dbReference>
<dbReference type="GO" id="GO:0051287">
    <property type="term" value="F:NAD binding"/>
    <property type="evidence" value="ECO:0007669"/>
    <property type="project" value="UniProtKB-UniRule"/>
</dbReference>
<dbReference type="GO" id="GO:0050661">
    <property type="term" value="F:NADP binding"/>
    <property type="evidence" value="ECO:0007669"/>
    <property type="project" value="UniProtKB-UniRule"/>
</dbReference>
<dbReference type="GO" id="GO:0016726">
    <property type="term" value="F:oxidoreductase activity, acting on CH or CH2 groups, NAD or NADP as acceptor"/>
    <property type="evidence" value="ECO:0007669"/>
    <property type="project" value="UniProtKB-UniRule"/>
</dbReference>
<dbReference type="GO" id="GO:0019877">
    <property type="term" value="P:diaminopimelate biosynthetic process"/>
    <property type="evidence" value="ECO:0007669"/>
    <property type="project" value="UniProtKB-UniRule"/>
</dbReference>
<dbReference type="GO" id="GO:0009089">
    <property type="term" value="P:lysine biosynthetic process via diaminopimelate"/>
    <property type="evidence" value="ECO:0007669"/>
    <property type="project" value="UniProtKB-UniRule"/>
</dbReference>
<dbReference type="CDD" id="cd02274">
    <property type="entry name" value="DHDPR_N"/>
    <property type="match status" value="1"/>
</dbReference>
<dbReference type="FunFam" id="3.30.360.10:FF:000009">
    <property type="entry name" value="4-hydroxy-tetrahydrodipicolinate reductase"/>
    <property type="match status" value="1"/>
</dbReference>
<dbReference type="Gene3D" id="3.30.360.10">
    <property type="entry name" value="Dihydrodipicolinate Reductase, domain 2"/>
    <property type="match status" value="1"/>
</dbReference>
<dbReference type="Gene3D" id="3.40.50.720">
    <property type="entry name" value="NAD(P)-binding Rossmann-like Domain"/>
    <property type="match status" value="1"/>
</dbReference>
<dbReference type="HAMAP" id="MF_00102">
    <property type="entry name" value="DapB"/>
    <property type="match status" value="1"/>
</dbReference>
<dbReference type="InterPro" id="IPR022663">
    <property type="entry name" value="DapB_C"/>
</dbReference>
<dbReference type="InterPro" id="IPR000846">
    <property type="entry name" value="DapB_N"/>
</dbReference>
<dbReference type="InterPro" id="IPR022664">
    <property type="entry name" value="DapB_N_CS"/>
</dbReference>
<dbReference type="InterPro" id="IPR023940">
    <property type="entry name" value="DHDPR_bac"/>
</dbReference>
<dbReference type="InterPro" id="IPR036291">
    <property type="entry name" value="NAD(P)-bd_dom_sf"/>
</dbReference>
<dbReference type="NCBIfam" id="TIGR00036">
    <property type="entry name" value="dapB"/>
    <property type="match status" value="1"/>
</dbReference>
<dbReference type="PANTHER" id="PTHR20836:SF0">
    <property type="entry name" value="4-HYDROXY-TETRAHYDRODIPICOLINATE REDUCTASE 1, CHLOROPLASTIC-RELATED"/>
    <property type="match status" value="1"/>
</dbReference>
<dbReference type="PANTHER" id="PTHR20836">
    <property type="entry name" value="DIHYDRODIPICOLINATE REDUCTASE"/>
    <property type="match status" value="1"/>
</dbReference>
<dbReference type="Pfam" id="PF05173">
    <property type="entry name" value="DapB_C"/>
    <property type="match status" value="1"/>
</dbReference>
<dbReference type="Pfam" id="PF01113">
    <property type="entry name" value="DapB_N"/>
    <property type="match status" value="1"/>
</dbReference>
<dbReference type="PIRSF" id="PIRSF000161">
    <property type="entry name" value="DHPR"/>
    <property type="match status" value="1"/>
</dbReference>
<dbReference type="SUPFAM" id="SSF55347">
    <property type="entry name" value="Glyceraldehyde-3-phosphate dehydrogenase-like, C-terminal domain"/>
    <property type="match status" value="1"/>
</dbReference>
<dbReference type="SUPFAM" id="SSF51735">
    <property type="entry name" value="NAD(P)-binding Rossmann-fold domains"/>
    <property type="match status" value="1"/>
</dbReference>
<dbReference type="PROSITE" id="PS01298">
    <property type="entry name" value="DAPB"/>
    <property type="match status" value="1"/>
</dbReference>
<proteinExistence type="inferred from homology"/>
<accession>Q8DUL9</accession>
<gene>
    <name evidence="1" type="primary">dapB</name>
    <name type="ordered locus">SMU_900</name>
</gene>
<organism>
    <name type="scientific">Streptococcus mutans serotype c (strain ATCC 700610 / UA159)</name>
    <dbReference type="NCBI Taxonomy" id="210007"/>
    <lineage>
        <taxon>Bacteria</taxon>
        <taxon>Bacillati</taxon>
        <taxon>Bacillota</taxon>
        <taxon>Bacilli</taxon>
        <taxon>Lactobacillales</taxon>
        <taxon>Streptococcaceae</taxon>
        <taxon>Streptococcus</taxon>
    </lineage>
</organism>
<comment type="function">
    <text evidence="1">Catalyzes the conversion of 4-hydroxy-tetrahydrodipicolinate (HTPA) to tetrahydrodipicolinate.</text>
</comment>
<comment type="catalytic activity">
    <reaction evidence="1">
        <text>(S)-2,3,4,5-tetrahydrodipicolinate + NAD(+) + H2O = (2S,4S)-4-hydroxy-2,3,4,5-tetrahydrodipicolinate + NADH + H(+)</text>
        <dbReference type="Rhea" id="RHEA:35323"/>
        <dbReference type="ChEBI" id="CHEBI:15377"/>
        <dbReference type="ChEBI" id="CHEBI:15378"/>
        <dbReference type="ChEBI" id="CHEBI:16845"/>
        <dbReference type="ChEBI" id="CHEBI:57540"/>
        <dbReference type="ChEBI" id="CHEBI:57945"/>
        <dbReference type="ChEBI" id="CHEBI:67139"/>
        <dbReference type="EC" id="1.17.1.8"/>
    </reaction>
</comment>
<comment type="catalytic activity">
    <reaction evidence="1">
        <text>(S)-2,3,4,5-tetrahydrodipicolinate + NADP(+) + H2O = (2S,4S)-4-hydroxy-2,3,4,5-tetrahydrodipicolinate + NADPH + H(+)</text>
        <dbReference type="Rhea" id="RHEA:35331"/>
        <dbReference type="ChEBI" id="CHEBI:15377"/>
        <dbReference type="ChEBI" id="CHEBI:15378"/>
        <dbReference type="ChEBI" id="CHEBI:16845"/>
        <dbReference type="ChEBI" id="CHEBI:57783"/>
        <dbReference type="ChEBI" id="CHEBI:58349"/>
        <dbReference type="ChEBI" id="CHEBI:67139"/>
        <dbReference type="EC" id="1.17.1.8"/>
    </reaction>
</comment>
<comment type="pathway">
    <text evidence="1">Amino-acid biosynthesis; L-lysine biosynthesis via DAP pathway; (S)-tetrahydrodipicolinate from L-aspartate: step 4/4.</text>
</comment>
<comment type="subcellular location">
    <subcellularLocation>
        <location evidence="1">Cytoplasm</location>
    </subcellularLocation>
</comment>
<comment type="similarity">
    <text evidence="1">Belongs to the DapB family.</text>
</comment>
<comment type="caution">
    <text evidence="2">Was originally thought to be a dihydrodipicolinate reductase (DHDPR), catalyzing the conversion of dihydrodipicolinate to tetrahydrodipicolinate. However, it was shown in E.coli that the substrate of the enzymatic reaction is not dihydrodipicolinate (DHDP) but in fact (2S,4S)-4-hydroxy-2,3,4,5-tetrahydrodipicolinic acid (HTPA), the product released by the DapA-catalyzed reaction.</text>
</comment>
<sequence length="255" mass="27805">MSIKVIVAGFKGRMGSTAVDMIKNDSELELAALLDPFAAEKEIDGVPVFTDKSDLVGLDAEVWVDFTIPKVAYENTHFALENGFRPVVGTTGFTQEQIADLMTLSADKKLGGLIAPNFAIGAVLLMEFAAKASKYFPDLEIIELHHDKKKDAPSGTAVKTAELIREARAYKKQGAADEEETLVGARGAEFDGFRIHSVRLPGLVAHQEVIFGAQGEGLTLRHDSYDRISFMSGVNLGIKEVVQREQLVYGLEHLL</sequence>
<evidence type="ECO:0000255" key="1">
    <source>
        <dbReference type="HAMAP-Rule" id="MF_00102"/>
    </source>
</evidence>
<evidence type="ECO:0000305" key="2"/>
<protein>
    <recommendedName>
        <fullName evidence="1">4-hydroxy-tetrahydrodipicolinate reductase</fullName>
        <shortName evidence="1">HTPA reductase</shortName>
        <ecNumber evidence="1">1.17.1.8</ecNumber>
    </recommendedName>
</protein>
<feature type="chain" id="PRO_0000141496" description="4-hydroxy-tetrahydrodipicolinate reductase">
    <location>
        <begin position="1"/>
        <end position="255"/>
    </location>
</feature>
<feature type="active site" description="Proton donor/acceptor" evidence="1">
    <location>
        <position position="145"/>
    </location>
</feature>
<feature type="active site" description="Proton donor" evidence="1">
    <location>
        <position position="149"/>
    </location>
</feature>
<feature type="binding site" evidence="1">
    <location>
        <begin position="9"/>
        <end position="14"/>
    </location>
    <ligand>
        <name>NAD(+)</name>
        <dbReference type="ChEBI" id="CHEBI:57540"/>
    </ligand>
</feature>
<feature type="binding site" evidence="1">
    <location>
        <begin position="89"/>
        <end position="91"/>
    </location>
    <ligand>
        <name>NAD(+)</name>
        <dbReference type="ChEBI" id="CHEBI:57540"/>
    </ligand>
</feature>
<feature type="binding site" evidence="1">
    <location>
        <begin position="115"/>
        <end position="118"/>
    </location>
    <ligand>
        <name>NAD(+)</name>
        <dbReference type="ChEBI" id="CHEBI:57540"/>
    </ligand>
</feature>
<feature type="binding site" evidence="1">
    <location>
        <position position="146"/>
    </location>
    <ligand>
        <name>(S)-2,3,4,5-tetrahydrodipicolinate</name>
        <dbReference type="ChEBI" id="CHEBI:16845"/>
    </ligand>
</feature>
<feature type="binding site" evidence="1">
    <location>
        <begin position="155"/>
        <end position="156"/>
    </location>
    <ligand>
        <name>(S)-2,3,4,5-tetrahydrodipicolinate</name>
        <dbReference type="ChEBI" id="CHEBI:16845"/>
    </ligand>
</feature>